<proteinExistence type="inferred from homology"/>
<protein>
    <recommendedName>
        <fullName evidence="1">Small ribosomal subunit protein bS6</fullName>
    </recommendedName>
    <alternativeName>
        <fullName evidence="3">30S ribosomal protein S6</fullName>
    </alternativeName>
</protein>
<accession>A7MSX8</accession>
<name>RS6_VIBC1</name>
<feature type="chain" id="PRO_1000005383" description="Small ribosomal subunit protein bS6">
    <location>
        <begin position="1"/>
        <end position="129"/>
    </location>
</feature>
<feature type="region of interest" description="Disordered" evidence="2">
    <location>
        <begin position="103"/>
        <end position="129"/>
    </location>
</feature>
<feature type="compositionally biased region" description="Basic and acidic residues" evidence="2">
    <location>
        <begin position="104"/>
        <end position="129"/>
    </location>
</feature>
<evidence type="ECO:0000255" key="1">
    <source>
        <dbReference type="HAMAP-Rule" id="MF_00360"/>
    </source>
</evidence>
<evidence type="ECO:0000256" key="2">
    <source>
        <dbReference type="SAM" id="MobiDB-lite"/>
    </source>
</evidence>
<evidence type="ECO:0000305" key="3"/>
<comment type="function">
    <text evidence="1">Binds together with bS18 to 16S ribosomal RNA.</text>
</comment>
<comment type="similarity">
    <text evidence="1">Belongs to the bacterial ribosomal protein bS6 family.</text>
</comment>
<dbReference type="EMBL" id="CP000789">
    <property type="protein sequence ID" value="ABU69083.1"/>
    <property type="molecule type" value="Genomic_DNA"/>
</dbReference>
<dbReference type="RefSeq" id="WP_005438446.1">
    <property type="nucleotide sequence ID" value="NC_022269.1"/>
</dbReference>
<dbReference type="SMR" id="A7MSX8"/>
<dbReference type="GeneID" id="67376064"/>
<dbReference type="KEGG" id="vha:VIBHAR_00023"/>
<dbReference type="PATRIC" id="fig|338187.25.peg.2500"/>
<dbReference type="Proteomes" id="UP000008152">
    <property type="component" value="Chromosome I"/>
</dbReference>
<dbReference type="GO" id="GO:0022627">
    <property type="term" value="C:cytosolic small ribosomal subunit"/>
    <property type="evidence" value="ECO:0007669"/>
    <property type="project" value="TreeGrafter"/>
</dbReference>
<dbReference type="GO" id="GO:0070181">
    <property type="term" value="F:small ribosomal subunit rRNA binding"/>
    <property type="evidence" value="ECO:0007669"/>
    <property type="project" value="TreeGrafter"/>
</dbReference>
<dbReference type="GO" id="GO:0003735">
    <property type="term" value="F:structural constituent of ribosome"/>
    <property type="evidence" value="ECO:0007669"/>
    <property type="project" value="InterPro"/>
</dbReference>
<dbReference type="GO" id="GO:0006412">
    <property type="term" value="P:translation"/>
    <property type="evidence" value="ECO:0007669"/>
    <property type="project" value="UniProtKB-UniRule"/>
</dbReference>
<dbReference type="CDD" id="cd00473">
    <property type="entry name" value="bS6"/>
    <property type="match status" value="1"/>
</dbReference>
<dbReference type="FunFam" id="3.30.70.60:FF:000003">
    <property type="entry name" value="30S ribosomal protein S6"/>
    <property type="match status" value="1"/>
</dbReference>
<dbReference type="Gene3D" id="3.30.70.60">
    <property type="match status" value="1"/>
</dbReference>
<dbReference type="HAMAP" id="MF_00360">
    <property type="entry name" value="Ribosomal_bS6"/>
    <property type="match status" value="1"/>
</dbReference>
<dbReference type="InterPro" id="IPR000529">
    <property type="entry name" value="Ribosomal_bS6"/>
</dbReference>
<dbReference type="InterPro" id="IPR020815">
    <property type="entry name" value="Ribosomal_bS6_CS"/>
</dbReference>
<dbReference type="InterPro" id="IPR035980">
    <property type="entry name" value="Ribosomal_bS6_sf"/>
</dbReference>
<dbReference type="InterPro" id="IPR020814">
    <property type="entry name" value="Ribosomal_S6_plastid/chlpt"/>
</dbReference>
<dbReference type="InterPro" id="IPR014717">
    <property type="entry name" value="Transl_elong_EF1B/ribsomal_bS6"/>
</dbReference>
<dbReference type="NCBIfam" id="TIGR00166">
    <property type="entry name" value="S6"/>
    <property type="match status" value="1"/>
</dbReference>
<dbReference type="PANTHER" id="PTHR21011">
    <property type="entry name" value="MITOCHONDRIAL 28S RIBOSOMAL PROTEIN S6"/>
    <property type="match status" value="1"/>
</dbReference>
<dbReference type="PANTHER" id="PTHR21011:SF1">
    <property type="entry name" value="SMALL RIBOSOMAL SUBUNIT PROTEIN BS6M"/>
    <property type="match status" value="1"/>
</dbReference>
<dbReference type="Pfam" id="PF01250">
    <property type="entry name" value="Ribosomal_S6"/>
    <property type="match status" value="1"/>
</dbReference>
<dbReference type="SUPFAM" id="SSF54995">
    <property type="entry name" value="Ribosomal protein S6"/>
    <property type="match status" value="1"/>
</dbReference>
<dbReference type="PROSITE" id="PS01048">
    <property type="entry name" value="RIBOSOMAL_S6"/>
    <property type="match status" value="1"/>
</dbReference>
<sequence length="129" mass="14979">MRHYEIVFMVHPDQSEQVAGMIERYTGSITEAGGKIHRLEDWGRRQLAYPINKLHKAHYVLMNVEAGQEVIDELETAFRFNDAVLRNMIMRTKAAITEQSIMLKQKEERAERAPRREERAEAKPEAAAE</sequence>
<gene>
    <name evidence="1" type="primary">rpsF</name>
    <name type="ordered locus">VIBHAR_00023</name>
</gene>
<reference key="1">
    <citation type="submission" date="2007-08" db="EMBL/GenBank/DDBJ databases">
        <authorList>
            <consortium name="The Vibrio harveyi Genome Sequencing Project"/>
            <person name="Bassler B."/>
            <person name="Clifton S.W."/>
            <person name="Fulton L."/>
            <person name="Delehaunty K."/>
            <person name="Fronick C."/>
            <person name="Harrison M."/>
            <person name="Markivic C."/>
            <person name="Fulton R."/>
            <person name="Tin-Wollam A.-M."/>
            <person name="Shah N."/>
            <person name="Pepin K."/>
            <person name="Nash W."/>
            <person name="Thiruvilangam P."/>
            <person name="Bhonagiri V."/>
            <person name="Waters C."/>
            <person name="Tu K.C."/>
            <person name="Irgon J."/>
            <person name="Wilson R.K."/>
        </authorList>
    </citation>
    <scope>NUCLEOTIDE SEQUENCE [LARGE SCALE GENOMIC DNA]</scope>
    <source>
        <strain>ATCC BAA-1116 / BB120</strain>
    </source>
</reference>
<keyword id="KW-0687">Ribonucleoprotein</keyword>
<keyword id="KW-0689">Ribosomal protein</keyword>
<keyword id="KW-0694">RNA-binding</keyword>
<keyword id="KW-0699">rRNA-binding</keyword>
<organism>
    <name type="scientific">Vibrio campbellii (strain ATCC BAA-1116)</name>
    <dbReference type="NCBI Taxonomy" id="2902295"/>
    <lineage>
        <taxon>Bacteria</taxon>
        <taxon>Pseudomonadati</taxon>
        <taxon>Pseudomonadota</taxon>
        <taxon>Gammaproteobacteria</taxon>
        <taxon>Vibrionales</taxon>
        <taxon>Vibrionaceae</taxon>
        <taxon>Vibrio</taxon>
    </lineage>
</organism>